<proteinExistence type="evidence at protein level"/>
<name>THIO_METJA</name>
<dbReference type="EMBL" id="L77117">
    <property type="protein sequence ID" value="AAB98293.1"/>
    <property type="molecule type" value="Genomic_DNA"/>
</dbReference>
<dbReference type="PIR" id="D64338">
    <property type="entry name" value="D64338"/>
</dbReference>
<dbReference type="RefSeq" id="WP_010869805.1">
    <property type="nucleotide sequence ID" value="NC_000909.1"/>
</dbReference>
<dbReference type="PDB" id="1FO5">
    <property type="method" value="NMR"/>
    <property type="chains" value="A=1-85"/>
</dbReference>
<dbReference type="PDBsum" id="1FO5"/>
<dbReference type="BMRB" id="Q57755"/>
<dbReference type="SMR" id="Q57755"/>
<dbReference type="FunCoup" id="Q57755">
    <property type="interactions" value="5"/>
</dbReference>
<dbReference type="STRING" id="243232.MJ_0307"/>
<dbReference type="PaxDb" id="243232-MJ_0307"/>
<dbReference type="EnsemblBacteria" id="AAB98293">
    <property type="protein sequence ID" value="AAB98293"/>
    <property type="gene ID" value="MJ_0307"/>
</dbReference>
<dbReference type="GeneID" id="1451162"/>
<dbReference type="KEGG" id="mja:MJ_0307"/>
<dbReference type="eggNOG" id="arCOG01972">
    <property type="taxonomic scope" value="Archaea"/>
</dbReference>
<dbReference type="HOGENOM" id="CLU_090389_20_2_2"/>
<dbReference type="InParanoid" id="Q57755"/>
<dbReference type="OrthoDB" id="35385at2157"/>
<dbReference type="PhylomeDB" id="Q57755"/>
<dbReference type="EvolutionaryTrace" id="Q57755"/>
<dbReference type="Proteomes" id="UP000000805">
    <property type="component" value="Chromosome"/>
</dbReference>
<dbReference type="GO" id="GO:0005737">
    <property type="term" value="C:cytoplasm"/>
    <property type="evidence" value="ECO:0007669"/>
    <property type="project" value="UniProtKB-SubCell"/>
</dbReference>
<dbReference type="GO" id="GO:0009055">
    <property type="term" value="F:electron transfer activity"/>
    <property type="evidence" value="ECO:0007669"/>
    <property type="project" value="InterPro"/>
</dbReference>
<dbReference type="GO" id="GO:0015035">
    <property type="term" value="F:protein-disulfide reductase activity"/>
    <property type="evidence" value="ECO:0007669"/>
    <property type="project" value="InterPro"/>
</dbReference>
<dbReference type="GO" id="GO:0045454">
    <property type="term" value="P:cell redox homeostasis"/>
    <property type="evidence" value="ECO:0007669"/>
    <property type="project" value="InterPro"/>
</dbReference>
<dbReference type="CDD" id="cd02973">
    <property type="entry name" value="TRX_GRX_like"/>
    <property type="match status" value="1"/>
</dbReference>
<dbReference type="Gene3D" id="3.40.30.10">
    <property type="entry name" value="Glutaredoxin"/>
    <property type="match status" value="1"/>
</dbReference>
<dbReference type="InterPro" id="IPR011767">
    <property type="entry name" value="GLR_AS"/>
</dbReference>
<dbReference type="InterPro" id="IPR004502">
    <property type="entry name" value="Thio_glut"/>
</dbReference>
<dbReference type="InterPro" id="IPR012336">
    <property type="entry name" value="Thioredoxin-like_fold"/>
</dbReference>
<dbReference type="InterPro" id="IPR036249">
    <property type="entry name" value="Thioredoxin-like_sf"/>
</dbReference>
<dbReference type="InterPro" id="IPR013766">
    <property type="entry name" value="Thioredoxin_domain"/>
</dbReference>
<dbReference type="NCBIfam" id="TIGR00411">
    <property type="entry name" value="redox_disulf_1"/>
    <property type="match status" value="1"/>
</dbReference>
<dbReference type="PANTHER" id="PTHR37170:SF1">
    <property type="entry name" value="GLUTAREDOXIN-LIKE PROTEIN"/>
    <property type="match status" value="1"/>
</dbReference>
<dbReference type="PANTHER" id="PTHR37170">
    <property type="entry name" value="GLUTAREDOXIN-RELATED"/>
    <property type="match status" value="1"/>
</dbReference>
<dbReference type="Pfam" id="PF13192">
    <property type="entry name" value="Thioredoxin_3"/>
    <property type="match status" value="1"/>
</dbReference>
<dbReference type="SUPFAM" id="SSF52833">
    <property type="entry name" value="Thioredoxin-like"/>
    <property type="match status" value="1"/>
</dbReference>
<dbReference type="PROSITE" id="PS00195">
    <property type="entry name" value="GLUTAREDOXIN_1"/>
    <property type="match status" value="1"/>
</dbReference>
<dbReference type="PROSITE" id="PS51354">
    <property type="entry name" value="GLUTAREDOXIN_2"/>
    <property type="match status" value="1"/>
</dbReference>
<reference key="1">
    <citation type="journal article" date="1996" name="Science">
        <title>Complete genome sequence of the methanogenic archaeon, Methanococcus jannaschii.</title>
        <authorList>
            <person name="Bult C.J."/>
            <person name="White O."/>
            <person name="Olsen G.J."/>
            <person name="Zhou L."/>
            <person name="Fleischmann R.D."/>
            <person name="Sutton G.G."/>
            <person name="Blake J.A."/>
            <person name="FitzGerald L.M."/>
            <person name="Clayton R.A."/>
            <person name="Gocayne J.D."/>
            <person name="Kerlavage A.R."/>
            <person name="Dougherty B.A."/>
            <person name="Tomb J.-F."/>
            <person name="Adams M.D."/>
            <person name="Reich C.I."/>
            <person name="Overbeek R."/>
            <person name="Kirkness E.F."/>
            <person name="Weinstock K.G."/>
            <person name="Merrick J.M."/>
            <person name="Glodek A."/>
            <person name="Scott J.L."/>
            <person name="Geoghagen N.S.M."/>
            <person name="Weidman J.F."/>
            <person name="Fuhrmann J.L."/>
            <person name="Nguyen D."/>
            <person name="Utterback T.R."/>
            <person name="Kelley J.M."/>
            <person name="Peterson J.D."/>
            <person name="Sadow P.W."/>
            <person name="Hanna M.C."/>
            <person name="Cotton M.D."/>
            <person name="Roberts K.M."/>
            <person name="Hurst M.A."/>
            <person name="Kaine B.P."/>
            <person name="Borodovsky M."/>
            <person name="Klenk H.-P."/>
            <person name="Fraser C.M."/>
            <person name="Smith H.O."/>
            <person name="Woese C.R."/>
            <person name="Venter J.C."/>
        </authorList>
    </citation>
    <scope>NUCLEOTIDE SEQUENCE [LARGE SCALE GENOMIC DNA]</scope>
    <source>
        <strain>ATCC 43067 / DSM 2661 / JAL-1 / JCM 10045 / NBRC 100440</strain>
    </source>
</reference>
<reference key="2">
    <citation type="journal article" date="2000" name="Biochemistry">
        <title>A thioredoxin from the hyperthermophilic archaeon Methanococcus jannaschii has a glutaredoxin-like fold but thioredoxin-like activities.</title>
        <authorList>
            <person name="Lee D.Y."/>
            <person name="Ahn B.-Y."/>
            <person name="Kim K.-S."/>
        </authorList>
    </citation>
    <scope>FUNCTION</scope>
    <scope>STRUCTURE BY NMR</scope>
    <source>
        <strain>ATCC 43067 / DSM 2661 / JAL-1 / JCM 10045 / NBRC 100440</strain>
    </source>
</reference>
<accession>Q57755</accession>
<gene>
    <name type="primary">trx</name>
    <name type="ordered locus">MJ0307</name>
</gene>
<comment type="function">
    <text evidence="2">Acts to maintain redox homeostasis; functions as a protein disulfide reductase.</text>
</comment>
<comment type="biophysicochemical properties">
    <redoxPotential>
        <text>E(0) is -277 mV.</text>
    </redoxPotential>
</comment>
<comment type="subcellular location">
    <subcellularLocation>
        <location>Cytoplasm</location>
    </subcellularLocation>
</comment>
<comment type="similarity">
    <text evidence="3">Belongs to the glutaredoxin family.</text>
</comment>
<keyword id="KW-0002">3D-structure</keyword>
<keyword id="KW-0963">Cytoplasm</keyword>
<keyword id="KW-1015">Disulfide bond</keyword>
<keyword id="KW-0249">Electron transport</keyword>
<keyword id="KW-0676">Redox-active center</keyword>
<keyword id="KW-1185">Reference proteome</keyword>
<keyword id="KW-0813">Transport</keyword>
<feature type="chain" id="PRO_0000141645" description="Thioredoxin">
    <location>
        <begin position="1"/>
        <end position="85"/>
    </location>
</feature>
<feature type="domain" description="Glutaredoxin" evidence="1">
    <location>
        <begin position="1"/>
        <end position="85"/>
    </location>
</feature>
<feature type="disulfide bond" description="Redox-active">
    <location>
        <begin position="14"/>
        <end position="17"/>
    </location>
</feature>
<feature type="strand" evidence="4">
    <location>
        <begin position="4"/>
        <end position="10"/>
    </location>
</feature>
<feature type="helix" evidence="4">
    <location>
        <begin position="20"/>
        <end position="30"/>
    </location>
</feature>
<feature type="strand" evidence="4">
    <location>
        <begin position="32"/>
        <end position="45"/>
    </location>
</feature>
<feature type="turn" evidence="4">
    <location>
        <begin position="48"/>
        <end position="50"/>
    </location>
</feature>
<feature type="turn" evidence="4">
    <location>
        <begin position="52"/>
        <end position="54"/>
    </location>
</feature>
<feature type="strand" evidence="4">
    <location>
        <begin position="57"/>
        <end position="62"/>
    </location>
</feature>
<feature type="strand" evidence="4">
    <location>
        <begin position="65"/>
        <end position="67"/>
    </location>
</feature>
<feature type="strand" evidence="4">
    <location>
        <begin position="70"/>
        <end position="74"/>
    </location>
</feature>
<feature type="helix" evidence="4">
    <location>
        <begin position="75"/>
        <end position="84"/>
    </location>
</feature>
<organism>
    <name type="scientific">Methanocaldococcus jannaschii (strain ATCC 43067 / DSM 2661 / JAL-1 / JCM 10045 / NBRC 100440)</name>
    <name type="common">Methanococcus jannaschii</name>
    <dbReference type="NCBI Taxonomy" id="243232"/>
    <lineage>
        <taxon>Archaea</taxon>
        <taxon>Methanobacteriati</taxon>
        <taxon>Methanobacteriota</taxon>
        <taxon>Methanomada group</taxon>
        <taxon>Methanococci</taxon>
        <taxon>Methanococcales</taxon>
        <taxon>Methanocaldococcaceae</taxon>
        <taxon>Methanocaldococcus</taxon>
    </lineage>
</organism>
<evidence type="ECO:0000255" key="1">
    <source>
        <dbReference type="PROSITE-ProRule" id="PRU00686"/>
    </source>
</evidence>
<evidence type="ECO:0000269" key="2">
    <source>
    </source>
</evidence>
<evidence type="ECO:0000305" key="3"/>
<evidence type="ECO:0007829" key="4">
    <source>
        <dbReference type="PDB" id="1FO5"/>
    </source>
</evidence>
<sequence>MSKVKIELFTSPMCPHCPAAKRVVEEVANEMPDAVEVEYINVMENPQKAMEYGIMAVPTIVINGDVEFIGAPTKEALVEAIKKRL</sequence>
<protein>
    <recommendedName>
        <fullName>Thioredoxin</fullName>
    </recommendedName>
</protein>